<dbReference type="EMBL" id="CP000948">
    <property type="protein sequence ID" value="ACB04687.1"/>
    <property type="molecule type" value="Genomic_DNA"/>
</dbReference>
<dbReference type="RefSeq" id="WP_000091955.1">
    <property type="nucleotide sequence ID" value="NC_010473.1"/>
</dbReference>
<dbReference type="SMR" id="B1X971"/>
<dbReference type="GeneID" id="93778350"/>
<dbReference type="KEGG" id="ecd:ECDH10B_3819"/>
<dbReference type="HOGENOM" id="CLU_064548_3_1_6"/>
<dbReference type="GO" id="GO:0022625">
    <property type="term" value="C:cytosolic large ribosomal subunit"/>
    <property type="evidence" value="ECO:0007669"/>
    <property type="project" value="TreeGrafter"/>
</dbReference>
<dbReference type="GO" id="GO:0003735">
    <property type="term" value="F:structural constituent of ribosome"/>
    <property type="evidence" value="ECO:0007669"/>
    <property type="project" value="InterPro"/>
</dbReference>
<dbReference type="GO" id="GO:0006412">
    <property type="term" value="P:translation"/>
    <property type="evidence" value="ECO:0007669"/>
    <property type="project" value="UniProtKB-UniRule"/>
</dbReference>
<dbReference type="FunFam" id="2.30.170.40:FF:000001">
    <property type="entry name" value="50S ribosomal protein L28"/>
    <property type="match status" value="1"/>
</dbReference>
<dbReference type="Gene3D" id="2.30.170.40">
    <property type="entry name" value="Ribosomal protein L28/L24"/>
    <property type="match status" value="1"/>
</dbReference>
<dbReference type="HAMAP" id="MF_00373">
    <property type="entry name" value="Ribosomal_bL28"/>
    <property type="match status" value="1"/>
</dbReference>
<dbReference type="InterPro" id="IPR026569">
    <property type="entry name" value="Ribosomal_bL28"/>
</dbReference>
<dbReference type="InterPro" id="IPR034704">
    <property type="entry name" value="Ribosomal_bL28/bL31-like_sf"/>
</dbReference>
<dbReference type="InterPro" id="IPR001383">
    <property type="entry name" value="Ribosomal_bL28_bact-type"/>
</dbReference>
<dbReference type="InterPro" id="IPR037147">
    <property type="entry name" value="Ribosomal_bL28_sf"/>
</dbReference>
<dbReference type="NCBIfam" id="TIGR00009">
    <property type="entry name" value="L28"/>
    <property type="match status" value="1"/>
</dbReference>
<dbReference type="PANTHER" id="PTHR13528">
    <property type="entry name" value="39S RIBOSOMAL PROTEIN L28, MITOCHONDRIAL"/>
    <property type="match status" value="1"/>
</dbReference>
<dbReference type="PANTHER" id="PTHR13528:SF2">
    <property type="entry name" value="LARGE RIBOSOMAL SUBUNIT PROTEIN BL28M"/>
    <property type="match status" value="1"/>
</dbReference>
<dbReference type="Pfam" id="PF00830">
    <property type="entry name" value="Ribosomal_L28"/>
    <property type="match status" value="1"/>
</dbReference>
<dbReference type="SUPFAM" id="SSF143800">
    <property type="entry name" value="L28p-like"/>
    <property type="match status" value="1"/>
</dbReference>
<gene>
    <name evidence="1" type="primary">rpmB</name>
    <name type="ordered locus">ECDH10B_3819</name>
</gene>
<sequence length="78" mass="9006">MSRVCQVTGKRPVTGNNRSHALNATKRRFLPNLHSHRFWVESEKRFVTLRVSAKGMRVIDKKGIDTVLAELRARGEKY</sequence>
<evidence type="ECO:0000255" key="1">
    <source>
        <dbReference type="HAMAP-Rule" id="MF_00373"/>
    </source>
</evidence>
<evidence type="ECO:0000305" key="2"/>
<keyword id="KW-0687">Ribonucleoprotein</keyword>
<keyword id="KW-0689">Ribosomal protein</keyword>
<organism>
    <name type="scientific">Escherichia coli (strain K12 / DH10B)</name>
    <dbReference type="NCBI Taxonomy" id="316385"/>
    <lineage>
        <taxon>Bacteria</taxon>
        <taxon>Pseudomonadati</taxon>
        <taxon>Pseudomonadota</taxon>
        <taxon>Gammaproteobacteria</taxon>
        <taxon>Enterobacterales</taxon>
        <taxon>Enterobacteriaceae</taxon>
        <taxon>Escherichia</taxon>
    </lineage>
</organism>
<accession>B1X971</accession>
<feature type="chain" id="PRO_1000121629" description="Large ribosomal subunit protein bL28">
    <location>
        <begin position="1"/>
        <end position="78"/>
    </location>
</feature>
<reference key="1">
    <citation type="journal article" date="2008" name="J. Bacteriol.">
        <title>The complete genome sequence of Escherichia coli DH10B: insights into the biology of a laboratory workhorse.</title>
        <authorList>
            <person name="Durfee T."/>
            <person name="Nelson R."/>
            <person name="Baldwin S."/>
            <person name="Plunkett G. III"/>
            <person name="Burland V."/>
            <person name="Mau B."/>
            <person name="Petrosino J.F."/>
            <person name="Qin X."/>
            <person name="Muzny D.M."/>
            <person name="Ayele M."/>
            <person name="Gibbs R.A."/>
            <person name="Csorgo B."/>
            <person name="Posfai G."/>
            <person name="Weinstock G.M."/>
            <person name="Blattner F.R."/>
        </authorList>
    </citation>
    <scope>NUCLEOTIDE SEQUENCE [LARGE SCALE GENOMIC DNA]</scope>
    <source>
        <strain>K12 / DH10B</strain>
    </source>
</reference>
<name>RL28_ECODH</name>
<protein>
    <recommendedName>
        <fullName evidence="1">Large ribosomal subunit protein bL28</fullName>
    </recommendedName>
    <alternativeName>
        <fullName evidence="2">50S ribosomal protein L28</fullName>
    </alternativeName>
</protein>
<comment type="similarity">
    <text evidence="1">Belongs to the bacterial ribosomal protein bL28 family.</text>
</comment>
<proteinExistence type="inferred from homology"/>